<dbReference type="EMBL" id="CP001099">
    <property type="protein sequence ID" value="ACF11973.1"/>
    <property type="molecule type" value="Genomic_DNA"/>
</dbReference>
<dbReference type="RefSeq" id="WP_012502806.1">
    <property type="nucleotide sequence ID" value="NC_011027.1"/>
</dbReference>
<dbReference type="SMR" id="B3QPX0"/>
<dbReference type="STRING" id="517417.Cpar_1575"/>
<dbReference type="KEGG" id="cpc:Cpar_1575"/>
<dbReference type="eggNOG" id="COG1420">
    <property type="taxonomic scope" value="Bacteria"/>
</dbReference>
<dbReference type="HOGENOM" id="CLU_050019_1_0_10"/>
<dbReference type="OrthoDB" id="9783139at2"/>
<dbReference type="Proteomes" id="UP000008811">
    <property type="component" value="Chromosome"/>
</dbReference>
<dbReference type="GO" id="GO:0003677">
    <property type="term" value="F:DNA binding"/>
    <property type="evidence" value="ECO:0007669"/>
    <property type="project" value="InterPro"/>
</dbReference>
<dbReference type="GO" id="GO:0045892">
    <property type="term" value="P:negative regulation of DNA-templated transcription"/>
    <property type="evidence" value="ECO:0007669"/>
    <property type="project" value="UniProtKB-UniRule"/>
</dbReference>
<dbReference type="Gene3D" id="3.30.450.40">
    <property type="match status" value="1"/>
</dbReference>
<dbReference type="Gene3D" id="3.30.390.60">
    <property type="entry name" value="Heat-inducible transcription repressor hrca homolog, domain 3"/>
    <property type="match status" value="1"/>
</dbReference>
<dbReference type="Gene3D" id="1.10.10.10">
    <property type="entry name" value="Winged helix-like DNA-binding domain superfamily/Winged helix DNA-binding domain"/>
    <property type="match status" value="1"/>
</dbReference>
<dbReference type="HAMAP" id="MF_00081">
    <property type="entry name" value="HrcA"/>
    <property type="match status" value="1"/>
</dbReference>
<dbReference type="InterPro" id="IPR029016">
    <property type="entry name" value="GAF-like_dom_sf"/>
</dbReference>
<dbReference type="InterPro" id="IPR002571">
    <property type="entry name" value="HrcA"/>
</dbReference>
<dbReference type="InterPro" id="IPR021153">
    <property type="entry name" value="HrcA_C"/>
</dbReference>
<dbReference type="InterPro" id="IPR036388">
    <property type="entry name" value="WH-like_DNA-bd_sf"/>
</dbReference>
<dbReference type="InterPro" id="IPR036390">
    <property type="entry name" value="WH_DNA-bd_sf"/>
</dbReference>
<dbReference type="InterPro" id="IPR023120">
    <property type="entry name" value="WHTH_transcript_rep_HrcA_IDD"/>
</dbReference>
<dbReference type="NCBIfam" id="TIGR00331">
    <property type="entry name" value="hrcA"/>
    <property type="match status" value="1"/>
</dbReference>
<dbReference type="PANTHER" id="PTHR34824">
    <property type="entry name" value="HEAT-INDUCIBLE TRANSCRIPTION REPRESSOR HRCA"/>
    <property type="match status" value="1"/>
</dbReference>
<dbReference type="PANTHER" id="PTHR34824:SF1">
    <property type="entry name" value="HEAT-INDUCIBLE TRANSCRIPTION REPRESSOR HRCA"/>
    <property type="match status" value="1"/>
</dbReference>
<dbReference type="Pfam" id="PF01628">
    <property type="entry name" value="HrcA"/>
    <property type="match status" value="1"/>
</dbReference>
<dbReference type="PIRSF" id="PIRSF005485">
    <property type="entry name" value="HrcA"/>
    <property type="match status" value="1"/>
</dbReference>
<dbReference type="SUPFAM" id="SSF55781">
    <property type="entry name" value="GAF domain-like"/>
    <property type="match status" value="1"/>
</dbReference>
<dbReference type="SUPFAM" id="SSF46785">
    <property type="entry name" value="Winged helix' DNA-binding domain"/>
    <property type="match status" value="1"/>
</dbReference>
<evidence type="ECO:0000255" key="1">
    <source>
        <dbReference type="HAMAP-Rule" id="MF_00081"/>
    </source>
</evidence>
<name>HRCA_CHLP8</name>
<sequence length="356" mass="39129">MLYRDLTLRERQVLGIIIQSFVVSATPVGSRTIARNYNLGLSDATIRNVMADLEADGFISQPHTSAGRVPTDKGYRYYVDLLMNVSGIDEQEKQMIDARFSTRSSELKGTSAEVLGAAAKVLGSISRQLGVVLPPRLSNAVFERLDIVQLASTRIMVVIAIQSLFVKTIVMELTAEISRQKIDDVVNILNERLSGLTLEEIRSTIGKRLSDCQSREGLMNSIVGAADTLFDESSILDRLYVSGTENIVDQPEFKQPQKVRNIITMIEDKFGIARLVDNALPSGAYQGRDREVAISIGTENRTDNAIDLTIVSSPYYAGKMVGKVGIMGPKRMDYEHAVRVVNYMAGCLSEALSGNN</sequence>
<keyword id="KW-0678">Repressor</keyword>
<keyword id="KW-0346">Stress response</keyword>
<keyword id="KW-0804">Transcription</keyword>
<keyword id="KW-0805">Transcription regulation</keyword>
<proteinExistence type="inferred from homology"/>
<organism>
    <name type="scientific">Chlorobaculum parvum (strain DSM 263 / NCIMB 8327)</name>
    <name type="common">Chlorobium vibrioforme subsp. thiosulfatophilum</name>
    <dbReference type="NCBI Taxonomy" id="517417"/>
    <lineage>
        <taxon>Bacteria</taxon>
        <taxon>Pseudomonadati</taxon>
        <taxon>Chlorobiota</taxon>
        <taxon>Chlorobiia</taxon>
        <taxon>Chlorobiales</taxon>
        <taxon>Chlorobiaceae</taxon>
        <taxon>Chlorobaculum</taxon>
    </lineage>
</organism>
<comment type="function">
    <text evidence="1">Negative regulator of class I heat shock genes (grpE-dnaK-dnaJ and groELS operons). Prevents heat-shock induction of these operons.</text>
</comment>
<comment type="similarity">
    <text evidence="1">Belongs to the HrcA family.</text>
</comment>
<accession>B3QPX0</accession>
<gene>
    <name evidence="1" type="primary">hrcA</name>
    <name type="ordered locus">Cpar_1575</name>
</gene>
<protein>
    <recommendedName>
        <fullName evidence="1">Heat-inducible transcription repressor HrcA</fullName>
    </recommendedName>
</protein>
<reference key="1">
    <citation type="submission" date="2008-06" db="EMBL/GenBank/DDBJ databases">
        <title>Complete sequence of Chlorobaculum parvum NCIB 8327.</title>
        <authorList>
            <consortium name="US DOE Joint Genome Institute"/>
            <person name="Lucas S."/>
            <person name="Copeland A."/>
            <person name="Lapidus A."/>
            <person name="Glavina del Rio T."/>
            <person name="Dalin E."/>
            <person name="Tice H."/>
            <person name="Bruce D."/>
            <person name="Goodwin L."/>
            <person name="Pitluck S."/>
            <person name="Schmutz J."/>
            <person name="Larimer F."/>
            <person name="Land M."/>
            <person name="Hauser L."/>
            <person name="Kyrpides N."/>
            <person name="Mikhailova N."/>
            <person name="Zhao F."/>
            <person name="Li T."/>
            <person name="Liu Z."/>
            <person name="Overmann J."/>
            <person name="Bryant D.A."/>
            <person name="Richardson P."/>
        </authorList>
    </citation>
    <scope>NUCLEOTIDE SEQUENCE [LARGE SCALE GENOMIC DNA]</scope>
    <source>
        <strain>DSM 263 / NCIMB 8327</strain>
    </source>
</reference>
<feature type="chain" id="PRO_1000092802" description="Heat-inducible transcription repressor HrcA">
    <location>
        <begin position="1"/>
        <end position="356"/>
    </location>
</feature>